<sequence length="875" mass="97067">MTLARFVLALMLGALPEVVGFDSVLNDSLHHSHRHSPPAGPHYPYYLPTQQRPPRTRPPPPLPRFPRPPRALPAQRPHALQAGHTPRPHPWGCPAGEPWVSVTDFGAPCLRWAEVPPFLERSPPASWAQLRGQRHNFCRSPDGAGRPWCFYGDARGKVDWGYCDCRHGSVRLRGGKNEFEGTVEVYASGVWGTVCSSHWDDSDASVICHQLQLGGKGIAKQTPFSGLGLIPIYWSNVRCRGDEENILLCEKDIWQGGVCPQKMAAAVTCSFSHGPTFPIIRLAGGSSVHEGRVELYHAGQWGTVCDDQWDDADAEVICRQLGLSGIAKAWHQAYFGEGSGPVMLDEVRCTGNELSIEQCPKSSWGEHNCGHKEDAGVSCTPLTDGVIRLAGGKGSHEGRLEVYYRGQWGTVCDDGWTELNTYVVCRQLGFKYGKQASANHFEESTGPIWLDDVSCSGKETRFLQCSRRQWGRHDCSHREDVSIACYPGGEGHRLSLGFPVRLMDGENKKEGRVEVFINGQWGTICDDGWTDKDAAVICRQLGYKGPARARTMAYFGEGKGPIHVDNVKCTGNERSLADCIKQDIGRHNCRHSEDAGVICDYFGKKASGNSNKESLSSVCGLRLLHRRQKRIIGGKNSLRGGWPWQVSLRLKSSHGDGRLLCGATLLSSCWVLTAAHCFKRYGNSTRSYAVRVGDYHTLVPEEFEEEIGVQQIVIHREYRPDRSDYDIALVRLQGPEEQCARFSSHVLPACLPLWRERPQKTASNCYITGWGDTGRAYSRTLQQAAIPLLPKRFCEERYKGRFTGRMLCAGNLHEHKRVDSCQGDSGGPLMCERPGESWVVYGVTSWGYGCGVKDSPGVYTKVSAFVPWIKSVTKL</sequence>
<accession>P56730</accession>
<accession>Q9UP16</accession>
<organism>
    <name type="scientific">Homo sapiens</name>
    <name type="common">Human</name>
    <dbReference type="NCBI Taxonomy" id="9606"/>
    <lineage>
        <taxon>Eukaryota</taxon>
        <taxon>Metazoa</taxon>
        <taxon>Chordata</taxon>
        <taxon>Craniata</taxon>
        <taxon>Vertebrata</taxon>
        <taxon>Euteleostomi</taxon>
        <taxon>Mammalia</taxon>
        <taxon>Eutheria</taxon>
        <taxon>Euarchontoglires</taxon>
        <taxon>Primates</taxon>
        <taxon>Haplorrhini</taxon>
        <taxon>Catarrhini</taxon>
        <taxon>Hominidae</taxon>
        <taxon>Homo</taxon>
    </lineage>
</organism>
<keyword id="KW-1015">Disulfide bond</keyword>
<keyword id="KW-0325">Glycoprotein</keyword>
<keyword id="KW-0378">Hydrolase</keyword>
<keyword id="KW-0991">Intellectual disability</keyword>
<keyword id="KW-0420">Kringle</keyword>
<keyword id="KW-0645">Protease</keyword>
<keyword id="KW-1267">Proteomics identification</keyword>
<keyword id="KW-1185">Reference proteome</keyword>
<keyword id="KW-0677">Repeat</keyword>
<keyword id="KW-0964">Secreted</keyword>
<keyword id="KW-0720">Serine protease</keyword>
<keyword id="KW-0732">Signal</keyword>
<feature type="signal peptide" evidence="2">
    <location>
        <begin position="1"/>
        <end position="20"/>
    </location>
</feature>
<feature type="chain" id="PRO_0000027663" description="Neurotrypsin">
    <location>
        <begin position="21"/>
        <end position="875"/>
    </location>
</feature>
<feature type="domain" description="Kringle" evidence="3">
    <location>
        <begin position="93"/>
        <end position="165"/>
    </location>
</feature>
<feature type="domain" description="SRCR 1" evidence="4">
    <location>
        <begin position="170"/>
        <end position="271"/>
    </location>
</feature>
<feature type="domain" description="SRCR 2" evidence="4">
    <location>
        <begin position="280"/>
        <end position="381"/>
    </location>
</feature>
<feature type="domain" description="SRCR 3" evidence="4">
    <location>
        <begin position="387"/>
        <end position="487"/>
    </location>
</feature>
<feature type="domain" description="SRCR 4" evidence="4">
    <location>
        <begin position="500"/>
        <end position="601"/>
    </location>
</feature>
<feature type="domain" description="Peptidase S1" evidence="5">
    <location>
        <begin position="631"/>
        <end position="874"/>
    </location>
</feature>
<feature type="region of interest" description="Disordered" evidence="6">
    <location>
        <begin position="29"/>
        <end position="88"/>
    </location>
</feature>
<feature type="region of interest" description="Zymogen activation region">
    <location>
        <begin position="619"/>
        <end position="630"/>
    </location>
</feature>
<feature type="compositionally biased region" description="Pro residues" evidence="6">
    <location>
        <begin position="56"/>
        <end position="71"/>
    </location>
</feature>
<feature type="active site" description="Charge relay system" evidence="1">
    <location>
        <position position="676"/>
    </location>
</feature>
<feature type="active site" description="Charge relay system" evidence="1">
    <location>
        <position position="726"/>
    </location>
</feature>
<feature type="active site" description="Charge relay system" evidence="1">
    <location>
        <position position="825"/>
    </location>
</feature>
<feature type="site" description="Reactive bond homolog" evidence="2">
    <location>
        <begin position="630"/>
        <end position="631"/>
    </location>
</feature>
<feature type="glycosylation site" description="N-linked (GlcNAc...) asparagine" evidence="2">
    <location>
        <position position="26"/>
    </location>
</feature>
<feature type="glycosylation site" description="N-linked (GlcNAc...) asparagine" evidence="2">
    <location>
        <position position="683"/>
    </location>
</feature>
<feature type="disulfide bond" evidence="1">
    <location>
        <begin position="93"/>
        <end position="165"/>
    </location>
</feature>
<feature type="disulfide bond" evidence="1">
    <location>
        <begin position="109"/>
        <end position="149"/>
    </location>
</feature>
<feature type="disulfide bond" evidence="1">
    <location>
        <begin position="138"/>
        <end position="163"/>
    </location>
</feature>
<feature type="disulfide bond" evidence="1">
    <location>
        <begin position="195"/>
        <end position="259"/>
    </location>
</feature>
<feature type="disulfide bond" evidence="1">
    <location>
        <begin position="208"/>
        <end position="269"/>
    </location>
</feature>
<feature type="disulfide bond" evidence="1">
    <location>
        <begin position="239"/>
        <end position="249"/>
    </location>
</feature>
<feature type="disulfide bond" evidence="1">
    <location>
        <begin position="305"/>
        <end position="369"/>
    </location>
</feature>
<feature type="disulfide bond" evidence="1">
    <location>
        <begin position="318"/>
        <end position="379"/>
    </location>
</feature>
<feature type="disulfide bond" evidence="1">
    <location>
        <begin position="349"/>
        <end position="359"/>
    </location>
</feature>
<feature type="disulfide bond" evidence="1">
    <location>
        <begin position="412"/>
        <end position="475"/>
    </location>
</feature>
<feature type="disulfide bond" evidence="1">
    <location>
        <begin position="425"/>
        <end position="485"/>
    </location>
</feature>
<feature type="disulfide bond" evidence="1">
    <location>
        <begin position="455"/>
        <end position="465"/>
    </location>
</feature>
<feature type="disulfide bond" evidence="1">
    <location>
        <begin position="525"/>
        <end position="589"/>
    </location>
</feature>
<feature type="disulfide bond" evidence="1">
    <location>
        <begin position="538"/>
        <end position="599"/>
    </location>
</feature>
<feature type="disulfide bond" evidence="1">
    <location>
        <begin position="569"/>
        <end position="579"/>
    </location>
</feature>
<feature type="disulfide bond" evidence="2">
    <location>
        <begin position="619"/>
        <end position="750"/>
    </location>
</feature>
<feature type="disulfide bond" evidence="1">
    <location>
        <begin position="661"/>
        <end position="677"/>
    </location>
</feature>
<feature type="disulfide bond" evidence="1">
    <location>
        <begin position="765"/>
        <end position="831"/>
    </location>
</feature>
<feature type="disulfide bond" evidence="1">
    <location>
        <begin position="794"/>
        <end position="808"/>
    </location>
</feature>
<feature type="disulfide bond" evidence="1">
    <location>
        <begin position="821"/>
        <end position="850"/>
    </location>
</feature>
<feature type="sequence variant" id="VAR_051835" description="In dbSNP:rs28661939.">
    <original>A</original>
    <variation>S</variation>
    <location>
        <position position="606"/>
    </location>
</feature>
<feature type="sequence variant" id="VAR_051836" description="In dbSNP:rs17594503.">
    <original>R</original>
    <variation>Q</variation>
    <location>
        <position position="833"/>
    </location>
</feature>
<feature type="sequence conflict" description="In Ref. 1; CAA04816." evidence="8" ref="1">
    <original>R</original>
    <variation>T</variation>
    <location>
        <position position="55"/>
    </location>
</feature>
<feature type="sequence conflict" description="In Ref. 3; AAD25919." evidence="8" ref="3">
    <original>A</original>
    <variation>V</variation>
    <location>
        <position position="663"/>
    </location>
</feature>
<feature type="sequence conflict" description="In Ref. 3; AAD25919." evidence="8" ref="3">
    <original>E</original>
    <variation>V</variation>
    <location>
        <position position="701"/>
    </location>
</feature>
<feature type="sequence conflict" description="In Ref. 3; AAD25919." evidence="8" ref="3">
    <original>VVY</original>
    <variation>AAL</variation>
    <location>
        <begin position="839"/>
        <end position="841"/>
    </location>
</feature>
<gene>
    <name type="primary">PRSS12</name>
</gene>
<name>NETR_HUMAN</name>
<evidence type="ECO:0000250" key="1"/>
<evidence type="ECO:0000255" key="2"/>
<evidence type="ECO:0000255" key="3">
    <source>
        <dbReference type="PROSITE-ProRule" id="PRU00121"/>
    </source>
</evidence>
<evidence type="ECO:0000255" key="4">
    <source>
        <dbReference type="PROSITE-ProRule" id="PRU00196"/>
    </source>
</evidence>
<evidence type="ECO:0000255" key="5">
    <source>
        <dbReference type="PROSITE-ProRule" id="PRU00274"/>
    </source>
</evidence>
<evidence type="ECO:0000256" key="6">
    <source>
        <dbReference type="SAM" id="MobiDB-lite"/>
    </source>
</evidence>
<evidence type="ECO:0000269" key="7">
    <source>
    </source>
</evidence>
<evidence type="ECO:0000305" key="8"/>
<dbReference type="EC" id="3.4.21.-"/>
<dbReference type="EMBL" id="AJ001531">
    <property type="protein sequence ID" value="CAA04816.1"/>
    <property type="molecule type" value="mRNA"/>
</dbReference>
<dbReference type="EMBL" id="AC096762">
    <property type="status" value="NOT_ANNOTATED_CDS"/>
    <property type="molecule type" value="Genomic_DNA"/>
</dbReference>
<dbReference type="EMBL" id="AF077298">
    <property type="protein sequence ID" value="AAD25919.1"/>
    <property type="molecule type" value="mRNA"/>
</dbReference>
<dbReference type="CCDS" id="CCDS3709.1"/>
<dbReference type="RefSeq" id="NP_003610.2">
    <property type="nucleotide sequence ID" value="NM_003619.4"/>
</dbReference>
<dbReference type="SMR" id="P56730"/>
<dbReference type="BioGRID" id="114064">
    <property type="interactions" value="20"/>
</dbReference>
<dbReference type="FunCoup" id="P56730">
    <property type="interactions" value="50"/>
</dbReference>
<dbReference type="IntAct" id="P56730">
    <property type="interactions" value="14"/>
</dbReference>
<dbReference type="STRING" id="9606.ENSP00000296498"/>
<dbReference type="ChEMBL" id="CHEMBL4523246"/>
<dbReference type="MEROPS" id="S01.237"/>
<dbReference type="GlyCosmos" id="P56730">
    <property type="glycosylation" value="2 sites, No reported glycans"/>
</dbReference>
<dbReference type="GlyGen" id="P56730">
    <property type="glycosylation" value="2 sites"/>
</dbReference>
<dbReference type="iPTMnet" id="P56730"/>
<dbReference type="PhosphoSitePlus" id="P56730"/>
<dbReference type="BioMuta" id="PRSS12"/>
<dbReference type="DMDM" id="259016287"/>
<dbReference type="jPOST" id="P56730"/>
<dbReference type="MassIVE" id="P56730"/>
<dbReference type="PaxDb" id="9606-ENSP00000296498"/>
<dbReference type="PeptideAtlas" id="P56730"/>
<dbReference type="ProteomicsDB" id="56941"/>
<dbReference type="Antibodypedia" id="26601">
    <property type="antibodies" value="128 antibodies from 25 providers"/>
</dbReference>
<dbReference type="DNASU" id="8492"/>
<dbReference type="Ensembl" id="ENST00000296498.3">
    <property type="protein sequence ID" value="ENSP00000296498.3"/>
    <property type="gene ID" value="ENSG00000164099.3"/>
</dbReference>
<dbReference type="GeneID" id="8492"/>
<dbReference type="KEGG" id="hsa:8492"/>
<dbReference type="MANE-Select" id="ENST00000296498.3">
    <property type="protein sequence ID" value="ENSP00000296498.3"/>
    <property type="RefSeq nucleotide sequence ID" value="NM_003619.4"/>
    <property type="RefSeq protein sequence ID" value="NP_003610.2"/>
</dbReference>
<dbReference type="UCSC" id="uc003ica.3">
    <property type="organism name" value="human"/>
</dbReference>
<dbReference type="AGR" id="HGNC:9477"/>
<dbReference type="CTD" id="8492"/>
<dbReference type="DisGeNET" id="8492"/>
<dbReference type="GeneCards" id="PRSS12"/>
<dbReference type="HGNC" id="HGNC:9477">
    <property type="gene designation" value="PRSS12"/>
</dbReference>
<dbReference type="HPA" id="ENSG00000164099">
    <property type="expression patterns" value="Tissue enhanced (choroid)"/>
</dbReference>
<dbReference type="MalaCards" id="PRSS12"/>
<dbReference type="MIM" id="249500">
    <property type="type" value="phenotype"/>
</dbReference>
<dbReference type="MIM" id="606709">
    <property type="type" value="gene"/>
</dbReference>
<dbReference type="neXtProt" id="NX_P56730"/>
<dbReference type="OpenTargets" id="ENSG00000164099"/>
<dbReference type="Orphanet" id="88616">
    <property type="disease" value="Autosomal recessive non-syndromic intellectual disability"/>
</dbReference>
<dbReference type="PharmGKB" id="PA33830"/>
<dbReference type="VEuPathDB" id="HostDB:ENSG00000164099"/>
<dbReference type="eggNOG" id="KOG3627">
    <property type="taxonomic scope" value="Eukaryota"/>
</dbReference>
<dbReference type="GeneTree" id="ENSGT00940000158131"/>
<dbReference type="HOGENOM" id="CLU_013656_0_0_1"/>
<dbReference type="InParanoid" id="P56730"/>
<dbReference type="OMA" id="GPIHADN"/>
<dbReference type="OrthoDB" id="536948at2759"/>
<dbReference type="PAN-GO" id="P56730">
    <property type="GO annotations" value="6 GO annotations based on evolutionary models"/>
</dbReference>
<dbReference type="PhylomeDB" id="P56730"/>
<dbReference type="TreeFam" id="TF329295"/>
<dbReference type="PathwayCommons" id="P56730"/>
<dbReference type="SignaLink" id="P56730"/>
<dbReference type="BioGRID-ORCS" id="8492">
    <property type="hits" value="9 hits in 1146 CRISPR screens"/>
</dbReference>
<dbReference type="ChiTaRS" id="PRSS12">
    <property type="organism name" value="human"/>
</dbReference>
<dbReference type="GenomeRNAi" id="8492"/>
<dbReference type="Pharos" id="P56730">
    <property type="development level" value="Tchem"/>
</dbReference>
<dbReference type="PRO" id="PR:P56730"/>
<dbReference type="Proteomes" id="UP000005640">
    <property type="component" value="Chromosome 4"/>
</dbReference>
<dbReference type="RNAct" id="P56730">
    <property type="molecule type" value="protein"/>
</dbReference>
<dbReference type="Bgee" id="ENSG00000164099">
    <property type="expression patterns" value="Expressed in bronchial epithelial cell and 136 other cell types or tissues"/>
</dbReference>
<dbReference type="GO" id="GO:0030424">
    <property type="term" value="C:axon"/>
    <property type="evidence" value="ECO:0000250"/>
    <property type="project" value="UniProtKB"/>
</dbReference>
<dbReference type="GO" id="GO:0031410">
    <property type="term" value="C:cytoplasmic vesicle"/>
    <property type="evidence" value="ECO:0007669"/>
    <property type="project" value="Ensembl"/>
</dbReference>
<dbReference type="GO" id="GO:0030425">
    <property type="term" value="C:dendrite"/>
    <property type="evidence" value="ECO:0000318"/>
    <property type="project" value="GO_Central"/>
</dbReference>
<dbReference type="GO" id="GO:0098978">
    <property type="term" value="C:glutamatergic synapse"/>
    <property type="evidence" value="ECO:0000314"/>
    <property type="project" value="SynGO"/>
</dbReference>
<dbReference type="GO" id="GO:0005886">
    <property type="term" value="C:plasma membrane"/>
    <property type="evidence" value="ECO:0000250"/>
    <property type="project" value="UniProtKB"/>
</dbReference>
<dbReference type="GO" id="GO:0098793">
    <property type="term" value="C:presynapse"/>
    <property type="evidence" value="ECO:0000314"/>
    <property type="project" value="SynGO"/>
</dbReference>
<dbReference type="GO" id="GO:0098685">
    <property type="term" value="C:Schaffer collateral - CA1 synapse"/>
    <property type="evidence" value="ECO:0007669"/>
    <property type="project" value="Ensembl"/>
</dbReference>
<dbReference type="GO" id="GO:0043083">
    <property type="term" value="C:synaptic cleft"/>
    <property type="evidence" value="ECO:0000318"/>
    <property type="project" value="GO_Central"/>
</dbReference>
<dbReference type="GO" id="GO:0043195">
    <property type="term" value="C:terminal bouton"/>
    <property type="evidence" value="ECO:0000318"/>
    <property type="project" value="GO_Central"/>
</dbReference>
<dbReference type="GO" id="GO:0004252">
    <property type="term" value="F:serine-type endopeptidase activity"/>
    <property type="evidence" value="ECO:0007669"/>
    <property type="project" value="Ensembl"/>
</dbReference>
<dbReference type="GO" id="GO:0008236">
    <property type="term" value="F:serine-type peptidase activity"/>
    <property type="evidence" value="ECO:0000304"/>
    <property type="project" value="ProtInc"/>
</dbReference>
<dbReference type="GO" id="GO:0006887">
    <property type="term" value="P:exocytosis"/>
    <property type="evidence" value="ECO:0000250"/>
    <property type="project" value="UniProtKB"/>
</dbReference>
<dbReference type="GO" id="GO:0031638">
    <property type="term" value="P:zymogen activation"/>
    <property type="evidence" value="ECO:0007669"/>
    <property type="project" value="Ensembl"/>
</dbReference>
<dbReference type="CDD" id="cd00190">
    <property type="entry name" value="Tryp_SPc"/>
    <property type="match status" value="1"/>
</dbReference>
<dbReference type="FunFam" id="2.40.10.10:FF:000053">
    <property type="entry name" value="Neurotrypsin"/>
    <property type="match status" value="1"/>
</dbReference>
<dbReference type="FunFam" id="2.40.20.10:FF:000010">
    <property type="entry name" value="Neurotrypsin"/>
    <property type="match status" value="1"/>
</dbReference>
<dbReference type="FunFam" id="3.10.250.10:FF:000019">
    <property type="entry name" value="Neurotrypsin"/>
    <property type="match status" value="1"/>
</dbReference>
<dbReference type="FunFam" id="3.10.250.10:FF:000005">
    <property type="entry name" value="Neurotrypsin isoform A"/>
    <property type="match status" value="2"/>
</dbReference>
<dbReference type="FunFam" id="3.10.250.10:FF:000006">
    <property type="entry name" value="neurotrypsin isoform X2"/>
    <property type="match status" value="1"/>
</dbReference>
<dbReference type="Gene3D" id="2.40.20.10">
    <property type="entry name" value="Plasminogen Kringle 4"/>
    <property type="match status" value="1"/>
</dbReference>
<dbReference type="Gene3D" id="3.10.250.10">
    <property type="entry name" value="SRCR-like domain"/>
    <property type="match status" value="4"/>
</dbReference>
<dbReference type="Gene3D" id="2.40.10.10">
    <property type="entry name" value="Trypsin-like serine proteases"/>
    <property type="match status" value="1"/>
</dbReference>
<dbReference type="InterPro" id="IPR000001">
    <property type="entry name" value="Kringle"/>
</dbReference>
<dbReference type="InterPro" id="IPR013806">
    <property type="entry name" value="Kringle-like"/>
</dbReference>
<dbReference type="InterPro" id="IPR018056">
    <property type="entry name" value="Kringle_CS"/>
</dbReference>
<dbReference type="InterPro" id="IPR038178">
    <property type="entry name" value="Kringle_sf"/>
</dbReference>
<dbReference type="InterPro" id="IPR009003">
    <property type="entry name" value="Peptidase_S1_PA"/>
</dbReference>
<dbReference type="InterPro" id="IPR043504">
    <property type="entry name" value="Peptidase_S1_PA_chymotrypsin"/>
</dbReference>
<dbReference type="InterPro" id="IPR001314">
    <property type="entry name" value="Peptidase_S1A"/>
</dbReference>
<dbReference type="InterPro" id="IPR001190">
    <property type="entry name" value="SRCR"/>
</dbReference>
<dbReference type="InterPro" id="IPR036772">
    <property type="entry name" value="SRCR-like_dom_sf"/>
</dbReference>
<dbReference type="InterPro" id="IPR001254">
    <property type="entry name" value="Trypsin_dom"/>
</dbReference>
<dbReference type="InterPro" id="IPR018114">
    <property type="entry name" value="TRYPSIN_HIS"/>
</dbReference>
<dbReference type="InterPro" id="IPR033116">
    <property type="entry name" value="TRYPSIN_SER"/>
</dbReference>
<dbReference type="PANTHER" id="PTHR19331:SF465">
    <property type="entry name" value="EGG PEPTIDE SPERACT RECEPTOR"/>
    <property type="match status" value="1"/>
</dbReference>
<dbReference type="PANTHER" id="PTHR19331">
    <property type="entry name" value="SCAVENGER RECEPTOR DOMAIN-CONTAINING"/>
    <property type="match status" value="1"/>
</dbReference>
<dbReference type="Pfam" id="PF00051">
    <property type="entry name" value="Kringle"/>
    <property type="match status" value="1"/>
</dbReference>
<dbReference type="Pfam" id="PF00530">
    <property type="entry name" value="SRCR"/>
    <property type="match status" value="4"/>
</dbReference>
<dbReference type="Pfam" id="PF00089">
    <property type="entry name" value="Trypsin"/>
    <property type="match status" value="1"/>
</dbReference>
<dbReference type="PRINTS" id="PR00722">
    <property type="entry name" value="CHYMOTRYPSIN"/>
</dbReference>
<dbReference type="PRINTS" id="PR00258">
    <property type="entry name" value="SPERACTRCPTR"/>
</dbReference>
<dbReference type="SMART" id="SM00130">
    <property type="entry name" value="KR"/>
    <property type="match status" value="1"/>
</dbReference>
<dbReference type="SMART" id="SM00202">
    <property type="entry name" value="SR"/>
    <property type="match status" value="4"/>
</dbReference>
<dbReference type="SMART" id="SM00020">
    <property type="entry name" value="Tryp_SPc"/>
    <property type="match status" value="1"/>
</dbReference>
<dbReference type="SUPFAM" id="SSF57440">
    <property type="entry name" value="Kringle-like"/>
    <property type="match status" value="1"/>
</dbReference>
<dbReference type="SUPFAM" id="SSF56487">
    <property type="entry name" value="SRCR-like"/>
    <property type="match status" value="4"/>
</dbReference>
<dbReference type="SUPFAM" id="SSF50494">
    <property type="entry name" value="Trypsin-like serine proteases"/>
    <property type="match status" value="1"/>
</dbReference>
<dbReference type="PROSITE" id="PS00021">
    <property type="entry name" value="KRINGLE_1"/>
    <property type="match status" value="1"/>
</dbReference>
<dbReference type="PROSITE" id="PS50070">
    <property type="entry name" value="KRINGLE_2"/>
    <property type="match status" value="1"/>
</dbReference>
<dbReference type="PROSITE" id="PS00420">
    <property type="entry name" value="SRCR_1"/>
    <property type="match status" value="3"/>
</dbReference>
<dbReference type="PROSITE" id="PS50287">
    <property type="entry name" value="SRCR_2"/>
    <property type="match status" value="4"/>
</dbReference>
<dbReference type="PROSITE" id="PS50240">
    <property type="entry name" value="TRYPSIN_DOM"/>
    <property type="match status" value="1"/>
</dbReference>
<dbReference type="PROSITE" id="PS00134">
    <property type="entry name" value="TRYPSIN_HIS"/>
    <property type="match status" value="1"/>
</dbReference>
<dbReference type="PROSITE" id="PS00135">
    <property type="entry name" value="TRYPSIN_SER"/>
    <property type="match status" value="1"/>
</dbReference>
<comment type="function">
    <text evidence="1">Plays a role in neuronal plasticity and the proteolytic action may subserve structural reorganizations associated with learning and memory operations.</text>
</comment>
<comment type="subcellular location">
    <subcellularLocation>
        <location>Secreted</location>
    </subcellularLocation>
</comment>
<comment type="tissue specificity">
    <text>Brain and Leydig cells of the testis.</text>
</comment>
<comment type="disease" evidence="7">
    <disease id="DI-00714">
        <name>Intellectual developmental disorder, autosomal recessive 1</name>
        <acronym>MRT1</acronym>
        <description>A disorder characterized by significantly below average general intellectual functioning associated with impairments in adaptive behavior and manifested during the developmental period.</description>
        <dbReference type="MIM" id="249500"/>
    </disease>
    <text>The disease is caused by variants affecting the gene represented in this entry.</text>
</comment>
<comment type="similarity">
    <text evidence="5">Belongs to the peptidase S1 family.</text>
</comment>
<proteinExistence type="evidence at protein level"/>
<reference key="1">
    <citation type="journal article" date="1998" name="Biochim. Biophys. Acta">
        <title>Cloning and sequencing of the cDNA encoding human neurotrypsin.</title>
        <authorList>
            <person name="Proba K."/>
            <person name="Gschwend T.P."/>
            <person name="Sonderegger P."/>
        </authorList>
    </citation>
    <scope>NUCLEOTIDE SEQUENCE [MRNA]</scope>
    <source>
        <tissue>Brain</tissue>
    </source>
</reference>
<reference key="2">
    <citation type="journal article" date="2005" name="Nature">
        <title>Generation and annotation of the DNA sequences of human chromosomes 2 and 4.</title>
        <authorList>
            <person name="Hillier L.W."/>
            <person name="Graves T.A."/>
            <person name="Fulton R.S."/>
            <person name="Fulton L.A."/>
            <person name="Pepin K.H."/>
            <person name="Minx P."/>
            <person name="Wagner-McPherson C."/>
            <person name="Layman D."/>
            <person name="Wylie K."/>
            <person name="Sekhon M."/>
            <person name="Becker M.C."/>
            <person name="Fewell G.A."/>
            <person name="Delehaunty K.D."/>
            <person name="Miner T.L."/>
            <person name="Nash W.E."/>
            <person name="Kremitzki C."/>
            <person name="Oddy L."/>
            <person name="Du H."/>
            <person name="Sun H."/>
            <person name="Bradshaw-Cordum H."/>
            <person name="Ali J."/>
            <person name="Carter J."/>
            <person name="Cordes M."/>
            <person name="Harris A."/>
            <person name="Isak A."/>
            <person name="van Brunt A."/>
            <person name="Nguyen C."/>
            <person name="Du F."/>
            <person name="Courtney L."/>
            <person name="Kalicki J."/>
            <person name="Ozersky P."/>
            <person name="Abbott S."/>
            <person name="Armstrong J."/>
            <person name="Belter E.A."/>
            <person name="Caruso L."/>
            <person name="Cedroni M."/>
            <person name="Cotton M."/>
            <person name="Davidson T."/>
            <person name="Desai A."/>
            <person name="Elliott G."/>
            <person name="Erb T."/>
            <person name="Fronick C."/>
            <person name="Gaige T."/>
            <person name="Haakenson W."/>
            <person name="Haglund K."/>
            <person name="Holmes A."/>
            <person name="Harkins R."/>
            <person name="Kim K."/>
            <person name="Kruchowski S.S."/>
            <person name="Strong C.M."/>
            <person name="Grewal N."/>
            <person name="Goyea E."/>
            <person name="Hou S."/>
            <person name="Levy A."/>
            <person name="Martinka S."/>
            <person name="Mead K."/>
            <person name="McLellan M.D."/>
            <person name="Meyer R."/>
            <person name="Randall-Maher J."/>
            <person name="Tomlinson C."/>
            <person name="Dauphin-Kohlberg S."/>
            <person name="Kozlowicz-Reilly A."/>
            <person name="Shah N."/>
            <person name="Swearengen-Shahid S."/>
            <person name="Snider J."/>
            <person name="Strong J.T."/>
            <person name="Thompson J."/>
            <person name="Yoakum M."/>
            <person name="Leonard S."/>
            <person name="Pearman C."/>
            <person name="Trani L."/>
            <person name="Radionenko M."/>
            <person name="Waligorski J.E."/>
            <person name="Wang C."/>
            <person name="Rock S.M."/>
            <person name="Tin-Wollam A.-M."/>
            <person name="Maupin R."/>
            <person name="Latreille P."/>
            <person name="Wendl M.C."/>
            <person name="Yang S.-P."/>
            <person name="Pohl C."/>
            <person name="Wallis J.W."/>
            <person name="Spieth J."/>
            <person name="Bieri T.A."/>
            <person name="Berkowicz N."/>
            <person name="Nelson J.O."/>
            <person name="Osborne J."/>
            <person name="Ding L."/>
            <person name="Meyer R."/>
            <person name="Sabo A."/>
            <person name="Shotland Y."/>
            <person name="Sinha P."/>
            <person name="Wohldmann P.E."/>
            <person name="Cook L.L."/>
            <person name="Hickenbotham M.T."/>
            <person name="Eldred J."/>
            <person name="Williams D."/>
            <person name="Jones T.A."/>
            <person name="She X."/>
            <person name="Ciccarelli F.D."/>
            <person name="Izaurralde E."/>
            <person name="Taylor J."/>
            <person name="Schmutz J."/>
            <person name="Myers R.M."/>
            <person name="Cox D.R."/>
            <person name="Huang X."/>
            <person name="McPherson J.D."/>
            <person name="Mardis E.R."/>
            <person name="Clifton S.W."/>
            <person name="Warren W.C."/>
            <person name="Chinwalla A.T."/>
            <person name="Eddy S.R."/>
            <person name="Marra M.A."/>
            <person name="Ovcharenko I."/>
            <person name="Furey T.S."/>
            <person name="Miller W."/>
            <person name="Eichler E.E."/>
            <person name="Bork P."/>
            <person name="Suyama M."/>
            <person name="Torrents D."/>
            <person name="Waterston R.H."/>
            <person name="Wilson R.K."/>
        </authorList>
    </citation>
    <scope>NUCLEOTIDE SEQUENCE [LARGE SCALE GENOMIC DNA]</scope>
</reference>
<reference key="3">
    <citation type="journal article" date="1999" name="Eur. J. Biochem.">
        <title>Cloning and structural analysis of leydin, a novel human serine protease expressed by the Leydig cells of the testis.</title>
        <authorList>
            <person name="Poorafshar M."/>
            <person name="Hellman L."/>
        </authorList>
    </citation>
    <scope>NUCLEOTIDE SEQUENCE [MRNA] OF 615-875</scope>
    <source>
        <tissue>Testis</tissue>
    </source>
</reference>
<reference key="4">
    <citation type="journal article" date="2002" name="Science">
        <title>Truncating neurotrypsin mutation in autosomal recessive nonsyndromic mental retardation.</title>
        <authorList>
            <person name="Molinari F."/>
            <person name="Rio M."/>
            <person name="Meskenaite V."/>
            <person name="Encha-Razavi F."/>
            <person name="Auge J."/>
            <person name="Bacq D."/>
            <person name="Briault S."/>
            <person name="Vekemans M."/>
            <person name="Munnich A."/>
            <person name="Attie-Bitach T."/>
            <person name="Sonderegger P."/>
            <person name="Colleaux L."/>
        </authorList>
    </citation>
    <scope>INVOLVEMENT IN MRT1</scope>
</reference>
<protein>
    <recommendedName>
        <fullName>Neurotrypsin</fullName>
        <ecNumber>3.4.21.-</ecNumber>
    </recommendedName>
    <alternativeName>
        <fullName>Leydin</fullName>
    </alternativeName>
    <alternativeName>
        <fullName>Motopsin</fullName>
    </alternativeName>
    <alternativeName>
        <fullName>Serine protease 12</fullName>
    </alternativeName>
</protein>